<keyword id="KW-0414">Isoprene biosynthesis</keyword>
<keyword id="KW-0456">Lyase</keyword>
<keyword id="KW-0479">Metal-binding</keyword>
<sequence>MDIRTGNGFDVHAFGPGDHVWLCGVRVPHHRGLIGHSDADVGMHALTDAIYGALAEGDIGVHFPPSDPQWKGAASRIFLEHAMGRIAARGYTLANCDVTLICERPKIGPVAPAMREALAEIMGIAADRISVKATTSEKLGFTGREEGIAAIATVALLQA</sequence>
<reference key="1">
    <citation type="journal article" date="2009" name="J. Bacteriol.">
        <title>Complete genome sequence of Rhodobacter sphaeroides KD131.</title>
        <authorList>
            <person name="Lim S.-K."/>
            <person name="Kim S.J."/>
            <person name="Cha S.H."/>
            <person name="Oh Y.-K."/>
            <person name="Rhee H.-J."/>
            <person name="Kim M.-S."/>
            <person name="Lee J.K."/>
        </authorList>
    </citation>
    <scope>NUCLEOTIDE SEQUENCE [LARGE SCALE GENOMIC DNA]</scope>
    <source>
        <strain>KD131 / KCTC 12085</strain>
    </source>
</reference>
<proteinExistence type="inferred from homology"/>
<comment type="function">
    <text evidence="1">Involved in the biosynthesis of isopentenyl diphosphate (IPP) and dimethylallyl diphosphate (DMAPP), two major building blocks of isoprenoid compounds. Catalyzes the conversion of 4-diphosphocytidyl-2-C-methyl-D-erythritol 2-phosphate (CDP-ME2P) to 2-C-methyl-D-erythritol 2,4-cyclodiphosphate (ME-CPP) with a corresponding release of cytidine 5-monophosphate (CMP).</text>
</comment>
<comment type="catalytic activity">
    <reaction evidence="1">
        <text>4-CDP-2-C-methyl-D-erythritol 2-phosphate = 2-C-methyl-D-erythritol 2,4-cyclic diphosphate + CMP</text>
        <dbReference type="Rhea" id="RHEA:23864"/>
        <dbReference type="ChEBI" id="CHEBI:57919"/>
        <dbReference type="ChEBI" id="CHEBI:58483"/>
        <dbReference type="ChEBI" id="CHEBI:60377"/>
        <dbReference type="EC" id="4.6.1.12"/>
    </reaction>
</comment>
<comment type="cofactor">
    <cofactor evidence="1">
        <name>a divalent metal cation</name>
        <dbReference type="ChEBI" id="CHEBI:60240"/>
    </cofactor>
    <text evidence="1">Binds 1 divalent metal cation per subunit.</text>
</comment>
<comment type="pathway">
    <text evidence="1">Isoprenoid biosynthesis; isopentenyl diphosphate biosynthesis via DXP pathway; isopentenyl diphosphate from 1-deoxy-D-xylulose 5-phosphate: step 4/6.</text>
</comment>
<comment type="subunit">
    <text evidence="1">Homotrimer.</text>
</comment>
<comment type="similarity">
    <text evidence="1">Belongs to the IspF family.</text>
</comment>
<evidence type="ECO:0000255" key="1">
    <source>
        <dbReference type="HAMAP-Rule" id="MF_00107"/>
    </source>
</evidence>
<feature type="chain" id="PRO_1000190716" description="2-C-methyl-D-erythritol 2,4-cyclodiphosphate synthase">
    <location>
        <begin position="1"/>
        <end position="159"/>
    </location>
</feature>
<feature type="binding site" evidence="1">
    <location>
        <begin position="10"/>
        <end position="12"/>
    </location>
    <ligand>
        <name>4-CDP-2-C-methyl-D-erythritol 2-phosphate</name>
        <dbReference type="ChEBI" id="CHEBI:57919"/>
    </ligand>
</feature>
<feature type="binding site" evidence="1">
    <location>
        <position position="10"/>
    </location>
    <ligand>
        <name>a divalent metal cation</name>
        <dbReference type="ChEBI" id="CHEBI:60240"/>
    </ligand>
</feature>
<feature type="binding site" evidence="1">
    <location>
        <position position="12"/>
    </location>
    <ligand>
        <name>a divalent metal cation</name>
        <dbReference type="ChEBI" id="CHEBI:60240"/>
    </ligand>
</feature>
<feature type="binding site" evidence="1">
    <location>
        <begin position="36"/>
        <end position="37"/>
    </location>
    <ligand>
        <name>4-CDP-2-C-methyl-D-erythritol 2-phosphate</name>
        <dbReference type="ChEBI" id="CHEBI:57919"/>
    </ligand>
</feature>
<feature type="binding site" evidence="1">
    <location>
        <position position="44"/>
    </location>
    <ligand>
        <name>a divalent metal cation</name>
        <dbReference type="ChEBI" id="CHEBI:60240"/>
    </ligand>
</feature>
<feature type="binding site" evidence="1">
    <location>
        <begin position="58"/>
        <end position="60"/>
    </location>
    <ligand>
        <name>4-CDP-2-C-methyl-D-erythritol 2-phosphate</name>
        <dbReference type="ChEBI" id="CHEBI:57919"/>
    </ligand>
</feature>
<feature type="binding site" evidence="1">
    <location>
        <begin position="134"/>
        <end position="137"/>
    </location>
    <ligand>
        <name>4-CDP-2-C-methyl-D-erythritol 2-phosphate</name>
        <dbReference type="ChEBI" id="CHEBI:57919"/>
    </ligand>
</feature>
<feature type="binding site" evidence="1">
    <location>
        <position position="141"/>
    </location>
    <ligand>
        <name>4-CDP-2-C-methyl-D-erythritol 2-phosphate</name>
        <dbReference type="ChEBI" id="CHEBI:57919"/>
    </ligand>
</feature>
<feature type="binding site" evidence="1">
    <location>
        <position position="144"/>
    </location>
    <ligand>
        <name>4-CDP-2-C-methyl-D-erythritol 2-phosphate</name>
        <dbReference type="ChEBI" id="CHEBI:57919"/>
    </ligand>
</feature>
<feature type="site" description="Transition state stabilizer" evidence="1">
    <location>
        <position position="36"/>
    </location>
</feature>
<feature type="site" description="Transition state stabilizer" evidence="1">
    <location>
        <position position="135"/>
    </location>
</feature>
<gene>
    <name evidence="1" type="primary">ispF</name>
    <name type="ordered locus">RSKD131_1126</name>
</gene>
<protein>
    <recommendedName>
        <fullName evidence="1">2-C-methyl-D-erythritol 2,4-cyclodiphosphate synthase</fullName>
        <shortName evidence="1">MECDP-synthase</shortName>
        <shortName evidence="1">MECPP-synthase</shortName>
        <shortName evidence="1">MECPS</shortName>
        <ecNumber evidence="1">4.6.1.12</ecNumber>
    </recommendedName>
</protein>
<name>ISPF_CERSK</name>
<organism>
    <name type="scientific">Cereibacter sphaeroides (strain KD131 / KCTC 12085)</name>
    <name type="common">Rhodobacter sphaeroides</name>
    <dbReference type="NCBI Taxonomy" id="557760"/>
    <lineage>
        <taxon>Bacteria</taxon>
        <taxon>Pseudomonadati</taxon>
        <taxon>Pseudomonadota</taxon>
        <taxon>Alphaproteobacteria</taxon>
        <taxon>Rhodobacterales</taxon>
        <taxon>Paracoccaceae</taxon>
        <taxon>Cereibacter</taxon>
    </lineage>
</organism>
<accession>B9KSH9</accession>
<dbReference type="EC" id="4.6.1.12" evidence="1"/>
<dbReference type="EMBL" id="CP001150">
    <property type="protein sequence ID" value="ACM00986.1"/>
    <property type="molecule type" value="Genomic_DNA"/>
</dbReference>
<dbReference type="RefSeq" id="WP_009562175.1">
    <property type="nucleotide sequence ID" value="NC_011963.1"/>
</dbReference>
<dbReference type="SMR" id="B9KSH9"/>
<dbReference type="GeneID" id="67446554"/>
<dbReference type="KEGG" id="rsk:RSKD131_1126"/>
<dbReference type="HOGENOM" id="CLU_084630_2_0_5"/>
<dbReference type="UniPathway" id="UPA00056">
    <property type="reaction ID" value="UER00095"/>
</dbReference>
<dbReference type="GO" id="GO:0008685">
    <property type="term" value="F:2-C-methyl-D-erythritol 2,4-cyclodiphosphate synthase activity"/>
    <property type="evidence" value="ECO:0007669"/>
    <property type="project" value="UniProtKB-UniRule"/>
</dbReference>
<dbReference type="GO" id="GO:0046872">
    <property type="term" value="F:metal ion binding"/>
    <property type="evidence" value="ECO:0007669"/>
    <property type="project" value="UniProtKB-KW"/>
</dbReference>
<dbReference type="GO" id="GO:0019288">
    <property type="term" value="P:isopentenyl diphosphate biosynthetic process, methylerythritol 4-phosphate pathway"/>
    <property type="evidence" value="ECO:0007669"/>
    <property type="project" value="UniProtKB-UniRule"/>
</dbReference>
<dbReference type="GO" id="GO:0016114">
    <property type="term" value="P:terpenoid biosynthetic process"/>
    <property type="evidence" value="ECO:0007669"/>
    <property type="project" value="InterPro"/>
</dbReference>
<dbReference type="CDD" id="cd00554">
    <property type="entry name" value="MECDP_synthase"/>
    <property type="match status" value="1"/>
</dbReference>
<dbReference type="FunFam" id="3.30.1330.50:FF:000001">
    <property type="entry name" value="2-C-methyl-D-erythritol 2,4-cyclodiphosphate synthase"/>
    <property type="match status" value="1"/>
</dbReference>
<dbReference type="Gene3D" id="3.30.1330.50">
    <property type="entry name" value="2-C-methyl-D-erythritol 2,4-cyclodiphosphate synthase"/>
    <property type="match status" value="1"/>
</dbReference>
<dbReference type="HAMAP" id="MF_00107">
    <property type="entry name" value="IspF"/>
    <property type="match status" value="1"/>
</dbReference>
<dbReference type="InterPro" id="IPR003526">
    <property type="entry name" value="MECDP_synthase"/>
</dbReference>
<dbReference type="InterPro" id="IPR020555">
    <property type="entry name" value="MECDP_synthase_CS"/>
</dbReference>
<dbReference type="InterPro" id="IPR036571">
    <property type="entry name" value="MECDP_synthase_sf"/>
</dbReference>
<dbReference type="NCBIfam" id="TIGR00151">
    <property type="entry name" value="ispF"/>
    <property type="match status" value="1"/>
</dbReference>
<dbReference type="PANTHER" id="PTHR43181">
    <property type="entry name" value="2-C-METHYL-D-ERYTHRITOL 2,4-CYCLODIPHOSPHATE SYNTHASE, CHLOROPLASTIC"/>
    <property type="match status" value="1"/>
</dbReference>
<dbReference type="PANTHER" id="PTHR43181:SF1">
    <property type="entry name" value="2-C-METHYL-D-ERYTHRITOL 2,4-CYCLODIPHOSPHATE SYNTHASE, CHLOROPLASTIC"/>
    <property type="match status" value="1"/>
</dbReference>
<dbReference type="Pfam" id="PF02542">
    <property type="entry name" value="YgbB"/>
    <property type="match status" value="1"/>
</dbReference>
<dbReference type="SUPFAM" id="SSF69765">
    <property type="entry name" value="IpsF-like"/>
    <property type="match status" value="1"/>
</dbReference>
<dbReference type="PROSITE" id="PS01350">
    <property type="entry name" value="ISPF"/>
    <property type="match status" value="1"/>
</dbReference>